<name>F16PC_CLOB1</name>
<dbReference type="EC" id="3.1.3.11" evidence="1"/>
<dbReference type="EMBL" id="CP000726">
    <property type="protein sequence ID" value="ABS33693.1"/>
    <property type="molecule type" value="Genomic_DNA"/>
</dbReference>
<dbReference type="RefSeq" id="WP_011948262.1">
    <property type="nucleotide sequence ID" value="NC_009697.1"/>
</dbReference>
<dbReference type="KEGG" id="cba:CLB_0556"/>
<dbReference type="HOGENOM" id="CLU_028392_2_0_9"/>
<dbReference type="UniPathway" id="UPA00138"/>
<dbReference type="GO" id="GO:0042132">
    <property type="term" value="F:fructose 1,6-bisphosphate 1-phosphatase activity"/>
    <property type="evidence" value="ECO:0007669"/>
    <property type="project" value="UniProtKB-UniRule"/>
</dbReference>
<dbReference type="GO" id="GO:0006094">
    <property type="term" value="P:gluconeogenesis"/>
    <property type="evidence" value="ECO:0007669"/>
    <property type="project" value="UniProtKB-UniRule"/>
</dbReference>
<dbReference type="Gene3D" id="3.60.21.10">
    <property type="match status" value="1"/>
</dbReference>
<dbReference type="HAMAP" id="MF_01854">
    <property type="entry name" value="FBPase_class3"/>
    <property type="match status" value="1"/>
</dbReference>
<dbReference type="InterPro" id="IPR009164">
    <property type="entry name" value="FBPtase_class3"/>
</dbReference>
<dbReference type="InterPro" id="IPR029052">
    <property type="entry name" value="Metallo-depent_PP-like"/>
</dbReference>
<dbReference type="Pfam" id="PF06874">
    <property type="entry name" value="FBPase_2"/>
    <property type="match status" value="1"/>
</dbReference>
<dbReference type="PIRSF" id="PIRSF000906">
    <property type="entry name" value="FBPtase_Bacill"/>
    <property type="match status" value="1"/>
</dbReference>
<dbReference type="SUPFAM" id="SSF56300">
    <property type="entry name" value="Metallo-dependent phosphatases"/>
    <property type="match status" value="1"/>
</dbReference>
<keyword id="KW-0119">Carbohydrate metabolism</keyword>
<keyword id="KW-0378">Hydrolase</keyword>
<keyword id="KW-0464">Manganese</keyword>
<comment type="catalytic activity">
    <reaction evidence="1">
        <text>beta-D-fructose 1,6-bisphosphate + H2O = beta-D-fructose 6-phosphate + phosphate</text>
        <dbReference type="Rhea" id="RHEA:11064"/>
        <dbReference type="ChEBI" id="CHEBI:15377"/>
        <dbReference type="ChEBI" id="CHEBI:32966"/>
        <dbReference type="ChEBI" id="CHEBI:43474"/>
        <dbReference type="ChEBI" id="CHEBI:57634"/>
        <dbReference type="EC" id="3.1.3.11"/>
    </reaction>
</comment>
<comment type="cofactor">
    <cofactor evidence="1">
        <name>Mn(2+)</name>
        <dbReference type="ChEBI" id="CHEBI:29035"/>
    </cofactor>
</comment>
<comment type="pathway">
    <text evidence="1">Carbohydrate biosynthesis; gluconeogenesis.</text>
</comment>
<comment type="similarity">
    <text evidence="1">Belongs to the FBPase class 3 family.</text>
</comment>
<reference key="1">
    <citation type="journal article" date="2007" name="PLoS ONE">
        <title>Analysis of the neurotoxin complex genes in Clostridium botulinum A1-A4 and B1 strains: BoNT/A3, /Ba4 and /B1 clusters are located within plasmids.</title>
        <authorList>
            <person name="Smith T.J."/>
            <person name="Hill K.K."/>
            <person name="Foley B.T."/>
            <person name="Detter J.C."/>
            <person name="Munk A.C."/>
            <person name="Bruce D.C."/>
            <person name="Doggett N.A."/>
            <person name="Smith L.A."/>
            <person name="Marks J.D."/>
            <person name="Xie G."/>
            <person name="Brettin T.S."/>
        </authorList>
    </citation>
    <scope>NUCLEOTIDE SEQUENCE [LARGE SCALE GENOMIC DNA]</scope>
    <source>
        <strain>ATCC 19397 / Type A</strain>
    </source>
</reference>
<gene>
    <name evidence="1" type="primary">fbp</name>
    <name type="ordered locus">CLB_0556</name>
</gene>
<evidence type="ECO:0000255" key="1">
    <source>
        <dbReference type="HAMAP-Rule" id="MF_01854"/>
    </source>
</evidence>
<protein>
    <recommendedName>
        <fullName evidence="1">Fructose-1,6-bisphosphatase class 3</fullName>
        <shortName evidence="1">FBPase class 3</shortName>
        <ecNumber evidence="1">3.1.3.11</ecNumber>
    </recommendedName>
    <alternativeName>
        <fullName evidence="1">D-fructose-1,6-bisphosphate 1-phosphohydrolase class 3</fullName>
    </alternativeName>
</protein>
<organism>
    <name type="scientific">Clostridium botulinum (strain ATCC 19397 / Type A)</name>
    <dbReference type="NCBI Taxonomy" id="441770"/>
    <lineage>
        <taxon>Bacteria</taxon>
        <taxon>Bacillati</taxon>
        <taxon>Bacillota</taxon>
        <taxon>Clostridia</taxon>
        <taxon>Eubacteriales</taxon>
        <taxon>Clostridiaceae</taxon>
        <taxon>Clostridium</taxon>
    </lineage>
</organism>
<accession>A7FRC9</accession>
<proteinExistence type="inferred from homology"/>
<sequence length="668" mass="77332">MTLYDENNLHIIKDNLRYLKLLSKQYPSISSASSEIINLQAILNLPKGTEHFISDVHGEYESFTHMLKNASGVIKRKIDDVFGTSLRECDKKNLATLIYYPEQKLDLIKKSEKNLEDWYKITLYRLIRLCQIVSSKYTRSKVRKSLPSDFAYIIEELLNEQGDRVDKQEYYNSIIETIIDIDRASEFIIAISNVIQRLVVDKLHIIGDIYDRGPGAEIIIEALSKHHSIDIQWGNHDIVWMGAAAGCEACIANVIRISLRYANLSTLEDGYGINLLPLATFAMDFYKEDNCENFKPRTIDKNLNETDIKLLSKMHKAISIIQFKLEGKIIKRRPEFKMGERLLLDKINIKEGTLNLNEKIYKLIDTNFPTLDKENPYELNERERDLVEKLTNSFINSEKLQRHIKFLYSNGNLYLKYNSNLLYHGCIPLNEDGSLKEVTLCKETLKGKSLLDKLDRLAREAYFFKKDPESKLYGMDMMWYLWCGSNSPLFGKKKMTTFERYFLDDKNTHKEQKNPYYKYRNDEKMCTMIFEEFELDADNSHIINGHIPVKTKEGENPIKANGKLLVIDGGFCKAYQPQTGIAGYTLIYNSYGLLLTSHEPFSSIHKAIVEGNDILSSTTILEHVSSRKRVLDTDSGEEIKKQIHDLEMLLVAYRKGLIKEENEANIRF</sequence>
<feature type="chain" id="PRO_0000363081" description="Fructose-1,6-bisphosphatase class 3">
    <location>
        <begin position="1"/>
        <end position="668"/>
    </location>
</feature>